<evidence type="ECO:0000250" key="1"/>
<evidence type="ECO:0000255" key="2">
    <source>
        <dbReference type="PROSITE-ProRule" id="PRU00649"/>
    </source>
</evidence>
<evidence type="ECO:0000256" key="3">
    <source>
        <dbReference type="SAM" id="MobiDB-lite"/>
    </source>
</evidence>
<evidence type="ECO:0000305" key="4"/>
<comment type="function">
    <text evidence="1">Transcription factor involved in RNA polymerase II transcription regulation. May function in both SPT15/TBP post-recruitment and recruitment steps of transcription (By similarity).</text>
</comment>
<comment type="subcellular location">
    <subcellularLocation>
        <location evidence="2">Nucleus</location>
    </subcellularLocation>
</comment>
<comment type="similarity">
    <text evidence="4">Belongs to the IWS1 family.</text>
</comment>
<reference key="1">
    <citation type="journal article" date="2003" name="Nucleic Acids Res.">
        <title>What's in the genome of a filamentous fungus? Analysis of the Neurospora genome sequence.</title>
        <authorList>
            <person name="Mannhaupt G."/>
            <person name="Montrone C."/>
            <person name="Haase D."/>
            <person name="Mewes H.-W."/>
            <person name="Aign V."/>
            <person name="Hoheisel J.D."/>
            <person name="Fartmann B."/>
            <person name="Nyakatura G."/>
            <person name="Kempken F."/>
            <person name="Maier J."/>
            <person name="Schulte U."/>
        </authorList>
    </citation>
    <scope>NUCLEOTIDE SEQUENCE [LARGE SCALE GENOMIC DNA]</scope>
    <source>
        <strain>ATCC 24698 / 74-OR23-1A / CBS 708.71 / DSM 1257 / FGSC 987</strain>
    </source>
</reference>
<reference key="2">
    <citation type="journal article" date="2003" name="Nature">
        <title>The genome sequence of the filamentous fungus Neurospora crassa.</title>
        <authorList>
            <person name="Galagan J.E."/>
            <person name="Calvo S.E."/>
            <person name="Borkovich K.A."/>
            <person name="Selker E.U."/>
            <person name="Read N.D."/>
            <person name="Jaffe D.B."/>
            <person name="FitzHugh W."/>
            <person name="Ma L.-J."/>
            <person name="Smirnov S."/>
            <person name="Purcell S."/>
            <person name="Rehman B."/>
            <person name="Elkins T."/>
            <person name="Engels R."/>
            <person name="Wang S."/>
            <person name="Nielsen C.B."/>
            <person name="Butler J."/>
            <person name="Endrizzi M."/>
            <person name="Qui D."/>
            <person name="Ianakiev P."/>
            <person name="Bell-Pedersen D."/>
            <person name="Nelson M.A."/>
            <person name="Werner-Washburne M."/>
            <person name="Selitrennikoff C.P."/>
            <person name="Kinsey J.A."/>
            <person name="Braun E.L."/>
            <person name="Zelter A."/>
            <person name="Schulte U."/>
            <person name="Kothe G.O."/>
            <person name="Jedd G."/>
            <person name="Mewes H.-W."/>
            <person name="Staben C."/>
            <person name="Marcotte E."/>
            <person name="Greenberg D."/>
            <person name="Roy A."/>
            <person name="Foley K."/>
            <person name="Naylor J."/>
            <person name="Stange-Thomann N."/>
            <person name="Barrett R."/>
            <person name="Gnerre S."/>
            <person name="Kamal M."/>
            <person name="Kamvysselis M."/>
            <person name="Mauceli E.W."/>
            <person name="Bielke C."/>
            <person name="Rudd S."/>
            <person name="Frishman D."/>
            <person name="Krystofova S."/>
            <person name="Rasmussen C."/>
            <person name="Metzenberg R.L."/>
            <person name="Perkins D.D."/>
            <person name="Kroken S."/>
            <person name="Cogoni C."/>
            <person name="Macino G."/>
            <person name="Catcheside D.E.A."/>
            <person name="Li W."/>
            <person name="Pratt R.J."/>
            <person name="Osmani S.A."/>
            <person name="DeSouza C.P.C."/>
            <person name="Glass N.L."/>
            <person name="Orbach M.J."/>
            <person name="Berglund J.A."/>
            <person name="Voelker R."/>
            <person name="Yarden O."/>
            <person name="Plamann M."/>
            <person name="Seiler S."/>
            <person name="Dunlap J.C."/>
            <person name="Radford A."/>
            <person name="Aramayo R."/>
            <person name="Natvig D.O."/>
            <person name="Alex L.A."/>
            <person name="Mannhaupt G."/>
            <person name="Ebbole D.J."/>
            <person name="Freitag M."/>
            <person name="Paulsen I."/>
            <person name="Sachs M.S."/>
            <person name="Lander E.S."/>
            <person name="Nusbaum C."/>
            <person name="Birren B.W."/>
        </authorList>
    </citation>
    <scope>NUCLEOTIDE SEQUENCE [LARGE SCALE GENOMIC DNA]</scope>
    <source>
        <strain>ATCC 24698 / 74-OR23-1A / CBS 708.71 / DSM 1257 / FGSC 987</strain>
    </source>
</reference>
<gene>
    <name type="primary">iws-1</name>
    <name type="ORF">B1D14.130</name>
    <name type="ORF">NCU09203</name>
</gene>
<accession>Q870S2</accession>
<accession>Q1K6D8</accession>
<sequence>MSDAASPAGSPAAEPTEHRDEDQVNETHQDDGSNHGGNDEDNDGGNDKDSDVLSEIDENEFGDDYGSRPVDIDENVAMKLKARRKTTTETTKKPKEGRRPKKRSRGDDDVDAADDDGERRPRKVRAEGERRARKEVEEQQAQQEENLTPDERRRRALERAIDAAVKNPTKRRRKKDDIDLEEETDEQIANLKVAMEKACVADNEAREQKQPAVHKLKLLPQVTAILNRTAIQDSVLDPEINFLQSVRYFLEPLNDGSLPAYNIQRAIMSALMKLPINKDVLLSSGIGKVVVYYNKSKSPSADIKRDAERLLGEWSRLILKRTDDYKKRHIEMREIDVGAVKLGQREGGSSQVTLTQRPAGKSRYEIERERALAPEVRNNNRARPVGLPASYTIAPKSTYIPGQAPTDHRPIGHSGHEAFRRMTQKGKGKR</sequence>
<protein>
    <recommendedName>
        <fullName>Transcription factor iws-1</fullName>
    </recommendedName>
</protein>
<proteinExistence type="inferred from homology"/>
<dbReference type="EMBL" id="BX295539">
    <property type="protein sequence ID" value="CAD79656.1"/>
    <property type="molecule type" value="Genomic_DNA"/>
</dbReference>
<dbReference type="EMBL" id="CM002236">
    <property type="protein sequence ID" value="EAA29911.1"/>
    <property type="molecule type" value="Genomic_DNA"/>
</dbReference>
<dbReference type="RefSeq" id="XP_959147.1">
    <property type="nucleotide sequence ID" value="XM_954054.2"/>
</dbReference>
<dbReference type="SMR" id="Q870S2"/>
<dbReference type="FunCoup" id="Q870S2">
    <property type="interactions" value="330"/>
</dbReference>
<dbReference type="STRING" id="367110.Q870S2"/>
<dbReference type="PaxDb" id="5141-EFNCRP00000008860"/>
<dbReference type="EnsemblFungi" id="EAA29911">
    <property type="protein sequence ID" value="EAA29911"/>
    <property type="gene ID" value="NCU09203"/>
</dbReference>
<dbReference type="GeneID" id="3875299"/>
<dbReference type="KEGG" id="ncr:NCU09203"/>
<dbReference type="VEuPathDB" id="FungiDB:NCU09203"/>
<dbReference type="HOGENOM" id="CLU_045275_1_0_1"/>
<dbReference type="InParanoid" id="Q870S2"/>
<dbReference type="OMA" id="MPAYNIQ"/>
<dbReference type="OrthoDB" id="21124at2759"/>
<dbReference type="Proteomes" id="UP000001805">
    <property type="component" value="Chromosome 1, Linkage Group I"/>
</dbReference>
<dbReference type="GO" id="GO:0005634">
    <property type="term" value="C:nucleus"/>
    <property type="evidence" value="ECO:0000318"/>
    <property type="project" value="GO_Central"/>
</dbReference>
<dbReference type="GO" id="GO:0016973">
    <property type="term" value="P:poly(A)+ mRNA export from nucleus"/>
    <property type="evidence" value="ECO:0000318"/>
    <property type="project" value="GO_Central"/>
</dbReference>
<dbReference type="FunFam" id="1.20.930.10:FF:000003">
    <property type="entry name" value="Putative Transcription factor IWS1"/>
    <property type="match status" value="1"/>
</dbReference>
<dbReference type="Gene3D" id="1.20.930.10">
    <property type="entry name" value="Conserved domain common to transcription factors TFIIS, elongin A, CRSP70"/>
    <property type="match status" value="1"/>
</dbReference>
<dbReference type="InterPro" id="IPR051037">
    <property type="entry name" value="RNAPII_TF_IWS1"/>
</dbReference>
<dbReference type="InterPro" id="IPR035441">
    <property type="entry name" value="TFIIS/LEDGF_dom_sf"/>
</dbReference>
<dbReference type="InterPro" id="IPR017923">
    <property type="entry name" value="TFIIS_N"/>
</dbReference>
<dbReference type="PANTHER" id="PTHR46010">
    <property type="entry name" value="PROTEIN IWS1 HOMOLOG"/>
    <property type="match status" value="1"/>
</dbReference>
<dbReference type="PANTHER" id="PTHR46010:SF1">
    <property type="entry name" value="PROTEIN IWS1 HOMOLOG"/>
    <property type="match status" value="1"/>
</dbReference>
<dbReference type="Pfam" id="PF08711">
    <property type="entry name" value="Med26"/>
    <property type="match status" value="1"/>
</dbReference>
<dbReference type="SUPFAM" id="SSF47676">
    <property type="entry name" value="Conserved domain common to transcription factors TFIIS, elongin A, CRSP70"/>
    <property type="match status" value="1"/>
</dbReference>
<dbReference type="PROSITE" id="PS51319">
    <property type="entry name" value="TFIIS_N"/>
    <property type="match status" value="1"/>
</dbReference>
<name>IWS1_NEUCR</name>
<organism>
    <name type="scientific">Neurospora crassa (strain ATCC 24698 / 74-OR23-1A / CBS 708.71 / DSM 1257 / FGSC 987)</name>
    <dbReference type="NCBI Taxonomy" id="367110"/>
    <lineage>
        <taxon>Eukaryota</taxon>
        <taxon>Fungi</taxon>
        <taxon>Dikarya</taxon>
        <taxon>Ascomycota</taxon>
        <taxon>Pezizomycotina</taxon>
        <taxon>Sordariomycetes</taxon>
        <taxon>Sordariomycetidae</taxon>
        <taxon>Sordariales</taxon>
        <taxon>Sordariaceae</taxon>
        <taxon>Neurospora</taxon>
    </lineage>
</organism>
<keyword id="KW-0539">Nucleus</keyword>
<keyword id="KW-1185">Reference proteome</keyword>
<keyword id="KW-0804">Transcription</keyword>
<keyword id="KW-0805">Transcription regulation</keyword>
<feature type="chain" id="PRO_0000083362" description="Transcription factor iws-1">
    <location>
        <begin position="1"/>
        <end position="430"/>
    </location>
</feature>
<feature type="domain" description="TFIIS N-terminal" evidence="2">
    <location>
        <begin position="244"/>
        <end position="321"/>
    </location>
</feature>
<feature type="region of interest" description="Disordered" evidence="3">
    <location>
        <begin position="1"/>
        <end position="153"/>
    </location>
</feature>
<feature type="region of interest" description="Disordered" evidence="3">
    <location>
        <begin position="402"/>
        <end position="430"/>
    </location>
</feature>
<feature type="compositionally biased region" description="Low complexity" evidence="3">
    <location>
        <begin position="1"/>
        <end position="14"/>
    </location>
</feature>
<feature type="compositionally biased region" description="Basic and acidic residues" evidence="3">
    <location>
        <begin position="15"/>
        <end position="33"/>
    </location>
</feature>
<feature type="compositionally biased region" description="Acidic residues" evidence="3">
    <location>
        <begin position="52"/>
        <end position="63"/>
    </location>
</feature>
<feature type="compositionally biased region" description="Basic residues" evidence="3">
    <location>
        <begin position="95"/>
        <end position="104"/>
    </location>
</feature>
<feature type="compositionally biased region" description="Basic and acidic residues" evidence="3">
    <location>
        <begin position="124"/>
        <end position="137"/>
    </location>
</feature>
<feature type="compositionally biased region" description="Basic and acidic residues" evidence="3">
    <location>
        <begin position="406"/>
        <end position="420"/>
    </location>
</feature>